<feature type="chain" id="PRO_1000066050" description="Alanine racemase">
    <location>
        <begin position="1"/>
        <end position="366"/>
    </location>
</feature>
<feature type="active site" description="Proton acceptor; specific for D-alanine" evidence="1">
    <location>
        <position position="40"/>
    </location>
</feature>
<feature type="active site" description="Proton acceptor; specific for L-alanine" evidence="1">
    <location>
        <position position="263"/>
    </location>
</feature>
<feature type="binding site" evidence="1">
    <location>
        <position position="136"/>
    </location>
    <ligand>
        <name>substrate</name>
    </ligand>
</feature>
<feature type="binding site" evidence="1">
    <location>
        <position position="310"/>
    </location>
    <ligand>
        <name>substrate</name>
    </ligand>
</feature>
<feature type="modified residue" description="N6-(pyridoxal phosphate)lysine" evidence="1">
    <location>
        <position position="40"/>
    </location>
</feature>
<gene>
    <name type="primary">alr</name>
    <name type="ordered locus">SpyM50314</name>
</gene>
<proteinExistence type="inferred from homology"/>
<dbReference type="EC" id="5.1.1.1" evidence="1"/>
<dbReference type="EMBL" id="AM295007">
    <property type="protein sequence ID" value="CAM29656.1"/>
    <property type="molecule type" value="Genomic_DNA"/>
</dbReference>
<dbReference type="RefSeq" id="WP_002995397.1">
    <property type="nucleotide sequence ID" value="NC_009332.1"/>
</dbReference>
<dbReference type="SMR" id="A2RCT3"/>
<dbReference type="KEGG" id="spf:SpyM50314"/>
<dbReference type="HOGENOM" id="CLU_028393_2_1_9"/>
<dbReference type="UniPathway" id="UPA00042">
    <property type="reaction ID" value="UER00497"/>
</dbReference>
<dbReference type="GO" id="GO:0005829">
    <property type="term" value="C:cytosol"/>
    <property type="evidence" value="ECO:0007669"/>
    <property type="project" value="TreeGrafter"/>
</dbReference>
<dbReference type="GO" id="GO:0008784">
    <property type="term" value="F:alanine racemase activity"/>
    <property type="evidence" value="ECO:0007669"/>
    <property type="project" value="UniProtKB-UniRule"/>
</dbReference>
<dbReference type="GO" id="GO:0030170">
    <property type="term" value="F:pyridoxal phosphate binding"/>
    <property type="evidence" value="ECO:0007669"/>
    <property type="project" value="UniProtKB-UniRule"/>
</dbReference>
<dbReference type="GO" id="GO:0030632">
    <property type="term" value="P:D-alanine biosynthetic process"/>
    <property type="evidence" value="ECO:0007669"/>
    <property type="project" value="UniProtKB-UniRule"/>
</dbReference>
<dbReference type="GO" id="GO:0009252">
    <property type="term" value="P:peptidoglycan biosynthetic process"/>
    <property type="evidence" value="ECO:0007669"/>
    <property type="project" value="TreeGrafter"/>
</dbReference>
<dbReference type="CDD" id="cd00430">
    <property type="entry name" value="PLPDE_III_AR"/>
    <property type="match status" value="1"/>
</dbReference>
<dbReference type="FunFam" id="2.40.37.10:FF:000006">
    <property type="entry name" value="Alanine racemase"/>
    <property type="match status" value="1"/>
</dbReference>
<dbReference type="FunFam" id="3.20.20.10:FF:000002">
    <property type="entry name" value="Alanine racemase"/>
    <property type="match status" value="1"/>
</dbReference>
<dbReference type="Gene3D" id="3.20.20.10">
    <property type="entry name" value="Alanine racemase"/>
    <property type="match status" value="1"/>
</dbReference>
<dbReference type="Gene3D" id="2.40.37.10">
    <property type="entry name" value="Lyase, Ornithine Decarboxylase, Chain A, domain 1"/>
    <property type="match status" value="1"/>
</dbReference>
<dbReference type="HAMAP" id="MF_01201">
    <property type="entry name" value="Ala_racemase"/>
    <property type="match status" value="1"/>
</dbReference>
<dbReference type="InterPro" id="IPR000821">
    <property type="entry name" value="Ala_racemase"/>
</dbReference>
<dbReference type="InterPro" id="IPR009006">
    <property type="entry name" value="Ala_racemase/Decarboxylase_C"/>
</dbReference>
<dbReference type="InterPro" id="IPR011079">
    <property type="entry name" value="Ala_racemase_C"/>
</dbReference>
<dbReference type="InterPro" id="IPR001608">
    <property type="entry name" value="Ala_racemase_N"/>
</dbReference>
<dbReference type="InterPro" id="IPR020622">
    <property type="entry name" value="Ala_racemase_pyridoxalP-BS"/>
</dbReference>
<dbReference type="InterPro" id="IPR029066">
    <property type="entry name" value="PLP-binding_barrel"/>
</dbReference>
<dbReference type="NCBIfam" id="TIGR00492">
    <property type="entry name" value="alr"/>
    <property type="match status" value="1"/>
</dbReference>
<dbReference type="PANTHER" id="PTHR30511">
    <property type="entry name" value="ALANINE RACEMASE"/>
    <property type="match status" value="1"/>
</dbReference>
<dbReference type="PANTHER" id="PTHR30511:SF0">
    <property type="entry name" value="ALANINE RACEMASE, CATABOLIC-RELATED"/>
    <property type="match status" value="1"/>
</dbReference>
<dbReference type="Pfam" id="PF00842">
    <property type="entry name" value="Ala_racemase_C"/>
    <property type="match status" value="1"/>
</dbReference>
<dbReference type="Pfam" id="PF01168">
    <property type="entry name" value="Ala_racemase_N"/>
    <property type="match status" value="1"/>
</dbReference>
<dbReference type="PRINTS" id="PR00992">
    <property type="entry name" value="ALARACEMASE"/>
</dbReference>
<dbReference type="SMART" id="SM01005">
    <property type="entry name" value="Ala_racemase_C"/>
    <property type="match status" value="1"/>
</dbReference>
<dbReference type="SUPFAM" id="SSF50621">
    <property type="entry name" value="Alanine racemase C-terminal domain-like"/>
    <property type="match status" value="1"/>
</dbReference>
<dbReference type="SUPFAM" id="SSF51419">
    <property type="entry name" value="PLP-binding barrel"/>
    <property type="match status" value="1"/>
</dbReference>
<dbReference type="PROSITE" id="PS00395">
    <property type="entry name" value="ALANINE_RACEMASE"/>
    <property type="match status" value="1"/>
</dbReference>
<evidence type="ECO:0000255" key="1">
    <source>
        <dbReference type="HAMAP-Rule" id="MF_01201"/>
    </source>
</evidence>
<comment type="function">
    <text evidence="1">Catalyzes the interconversion of L-alanine and D-alanine. May also act on other amino acids.</text>
</comment>
<comment type="catalytic activity">
    <reaction evidence="1">
        <text>L-alanine = D-alanine</text>
        <dbReference type="Rhea" id="RHEA:20249"/>
        <dbReference type="ChEBI" id="CHEBI:57416"/>
        <dbReference type="ChEBI" id="CHEBI:57972"/>
        <dbReference type="EC" id="5.1.1.1"/>
    </reaction>
</comment>
<comment type="cofactor">
    <cofactor evidence="1">
        <name>pyridoxal 5'-phosphate</name>
        <dbReference type="ChEBI" id="CHEBI:597326"/>
    </cofactor>
</comment>
<comment type="pathway">
    <text evidence="1">Amino-acid biosynthesis; D-alanine biosynthesis; D-alanine from L-alanine: step 1/1.</text>
</comment>
<comment type="similarity">
    <text evidence="1">Belongs to the alanine racemase family.</text>
</comment>
<keyword id="KW-0413">Isomerase</keyword>
<keyword id="KW-0663">Pyridoxal phosphate</keyword>
<sequence>MISSFHRPTVARVNLQAIKENVASVQKHIPLGVKTYAVVKADAYGHGAVQVSKALLPQVDGYCVSNLDEALQLRQAGIDKEILILGVLLPNELELAVANAITVTIASLDWIALARLEKKECQGLKVHVKVDSGMGRIGLRSSKEVNLLIDSLKELGADVEGIFTHFATADEADDTKFNQQLQFFKKLIAGLEDKPRLVHASNSATSIWHSDTIFNAVRLGIVSYGLNPSGSDLSLPFPLQEALSLESSLVHVKMISAGDTVGYGATYTAKKSEYVGTVPIGYADGWTRNMQGFSVLVDGQFCEIIGRVSMDQLTIRLSKAYPLGTKVTLIGSNQQKNISTTDIANYRNTINYEVLCLLSDRIPRIY</sequence>
<organism>
    <name type="scientific">Streptococcus pyogenes serotype M5 (strain Manfredo)</name>
    <dbReference type="NCBI Taxonomy" id="160491"/>
    <lineage>
        <taxon>Bacteria</taxon>
        <taxon>Bacillati</taxon>
        <taxon>Bacillota</taxon>
        <taxon>Bacilli</taxon>
        <taxon>Lactobacillales</taxon>
        <taxon>Streptococcaceae</taxon>
        <taxon>Streptococcus</taxon>
    </lineage>
</organism>
<reference key="1">
    <citation type="journal article" date="2007" name="J. Bacteriol.">
        <title>Complete genome of acute rheumatic fever-associated serotype M5 Streptococcus pyogenes strain Manfredo.</title>
        <authorList>
            <person name="Holden M.T.G."/>
            <person name="Scott A."/>
            <person name="Cherevach I."/>
            <person name="Chillingworth T."/>
            <person name="Churcher C."/>
            <person name="Cronin A."/>
            <person name="Dowd L."/>
            <person name="Feltwell T."/>
            <person name="Hamlin N."/>
            <person name="Holroyd S."/>
            <person name="Jagels K."/>
            <person name="Moule S."/>
            <person name="Mungall K."/>
            <person name="Quail M.A."/>
            <person name="Price C."/>
            <person name="Rabbinowitsch E."/>
            <person name="Sharp S."/>
            <person name="Skelton J."/>
            <person name="Whitehead S."/>
            <person name="Barrell B.G."/>
            <person name="Kehoe M."/>
            <person name="Parkhill J."/>
        </authorList>
    </citation>
    <scope>NUCLEOTIDE SEQUENCE [LARGE SCALE GENOMIC DNA]</scope>
    <source>
        <strain>Manfredo</strain>
    </source>
</reference>
<accession>A2RCT3</accession>
<protein>
    <recommendedName>
        <fullName evidence="1">Alanine racemase</fullName>
        <ecNumber evidence="1">5.1.1.1</ecNumber>
    </recommendedName>
</protein>
<name>ALR_STRPG</name>